<gene>
    <name type="primary">pdhD</name>
    <name type="ordered locus">SAS1031</name>
</gene>
<feature type="chain" id="PRO_0000068048" description="Dihydrolipoyl dehydrogenase">
    <location>
        <begin position="1"/>
        <end position="468"/>
    </location>
</feature>
<feature type="active site" description="Proton acceptor" evidence="1">
    <location>
        <position position="446"/>
    </location>
</feature>
<feature type="binding site" evidence="1">
    <location>
        <begin position="39"/>
        <end position="47"/>
    </location>
    <ligand>
        <name>FAD</name>
        <dbReference type="ChEBI" id="CHEBI:57692"/>
    </ligand>
</feature>
<feature type="binding site" evidence="1">
    <location>
        <position position="56"/>
    </location>
    <ligand>
        <name>FAD</name>
        <dbReference type="ChEBI" id="CHEBI:57692"/>
    </ligand>
</feature>
<feature type="binding site" evidence="1">
    <location>
        <position position="119"/>
    </location>
    <ligand>
        <name>FAD</name>
        <dbReference type="ChEBI" id="CHEBI:57692"/>
    </ligand>
</feature>
<feature type="binding site" evidence="1">
    <location>
        <begin position="183"/>
        <end position="187"/>
    </location>
    <ligand>
        <name>NAD(+)</name>
        <dbReference type="ChEBI" id="CHEBI:57540"/>
    </ligand>
</feature>
<feature type="binding site" evidence="1">
    <location>
        <position position="206"/>
    </location>
    <ligand>
        <name>NAD(+)</name>
        <dbReference type="ChEBI" id="CHEBI:57540"/>
    </ligand>
</feature>
<feature type="binding site" evidence="1">
    <location>
        <begin position="271"/>
        <end position="274"/>
    </location>
    <ligand>
        <name>NAD(+)</name>
        <dbReference type="ChEBI" id="CHEBI:57540"/>
    </ligand>
</feature>
<feature type="binding site" evidence="1">
    <location>
        <position position="314"/>
    </location>
    <ligand>
        <name>FAD</name>
        <dbReference type="ChEBI" id="CHEBI:57692"/>
    </ligand>
</feature>
<feature type="binding site" evidence="1">
    <location>
        <position position="322"/>
    </location>
    <ligand>
        <name>FAD</name>
        <dbReference type="ChEBI" id="CHEBI:57692"/>
    </ligand>
</feature>
<feature type="disulfide bond" description="Redox-active" evidence="1">
    <location>
        <begin position="47"/>
        <end position="52"/>
    </location>
</feature>
<comment type="function">
    <text evidence="1">Lipoamide dehydrogenase is a component of the alpha-ketoacid dehydrogenase complexes.</text>
</comment>
<comment type="catalytic activity">
    <reaction>
        <text>N(6)-[(R)-dihydrolipoyl]-L-lysyl-[protein] + NAD(+) = N(6)-[(R)-lipoyl]-L-lysyl-[protein] + NADH + H(+)</text>
        <dbReference type="Rhea" id="RHEA:15045"/>
        <dbReference type="Rhea" id="RHEA-COMP:10474"/>
        <dbReference type="Rhea" id="RHEA-COMP:10475"/>
        <dbReference type="ChEBI" id="CHEBI:15378"/>
        <dbReference type="ChEBI" id="CHEBI:57540"/>
        <dbReference type="ChEBI" id="CHEBI:57945"/>
        <dbReference type="ChEBI" id="CHEBI:83099"/>
        <dbReference type="ChEBI" id="CHEBI:83100"/>
        <dbReference type="EC" id="1.8.1.4"/>
    </reaction>
</comment>
<comment type="cofactor">
    <cofactor evidence="1">
        <name>FAD</name>
        <dbReference type="ChEBI" id="CHEBI:57692"/>
    </cofactor>
    <text evidence="1">Binds 1 FAD per subunit.</text>
</comment>
<comment type="subunit">
    <text evidence="1">Homodimer.</text>
</comment>
<comment type="subcellular location">
    <subcellularLocation>
        <location evidence="2">Cytoplasm</location>
    </subcellularLocation>
    <subcellularLocation>
        <location>Membrane</location>
        <topology>Peripheral membrane protein</topology>
    </subcellularLocation>
</comment>
<comment type="miscellaneous">
    <text>The active site is a redox-active disulfide bond.</text>
</comment>
<comment type="similarity">
    <text evidence="2">Belongs to the class-I pyridine nucleotide-disulfide oxidoreductase family.</text>
</comment>
<reference key="1">
    <citation type="journal article" date="2004" name="Proc. Natl. Acad. Sci. U.S.A.">
        <title>Complete genomes of two clinical Staphylococcus aureus strains: evidence for the rapid evolution of virulence and drug resistance.</title>
        <authorList>
            <person name="Holden M.T.G."/>
            <person name="Feil E.J."/>
            <person name="Lindsay J.A."/>
            <person name="Peacock S.J."/>
            <person name="Day N.P.J."/>
            <person name="Enright M.C."/>
            <person name="Foster T.J."/>
            <person name="Moore C.E."/>
            <person name="Hurst L."/>
            <person name="Atkin R."/>
            <person name="Barron A."/>
            <person name="Bason N."/>
            <person name="Bentley S.D."/>
            <person name="Chillingworth C."/>
            <person name="Chillingworth T."/>
            <person name="Churcher C."/>
            <person name="Clark L."/>
            <person name="Corton C."/>
            <person name="Cronin A."/>
            <person name="Doggett J."/>
            <person name="Dowd L."/>
            <person name="Feltwell T."/>
            <person name="Hance Z."/>
            <person name="Harris B."/>
            <person name="Hauser H."/>
            <person name="Holroyd S."/>
            <person name="Jagels K."/>
            <person name="James K.D."/>
            <person name="Lennard N."/>
            <person name="Line A."/>
            <person name="Mayes R."/>
            <person name="Moule S."/>
            <person name="Mungall K."/>
            <person name="Ormond D."/>
            <person name="Quail M.A."/>
            <person name="Rabbinowitsch E."/>
            <person name="Rutherford K.M."/>
            <person name="Sanders M."/>
            <person name="Sharp S."/>
            <person name="Simmonds M."/>
            <person name="Stevens K."/>
            <person name="Whitehead S."/>
            <person name="Barrell B.G."/>
            <person name="Spratt B.G."/>
            <person name="Parkhill J."/>
        </authorList>
    </citation>
    <scope>NUCLEOTIDE SEQUENCE [LARGE SCALE GENOMIC DNA]</scope>
    <source>
        <strain>MSSA476</strain>
    </source>
</reference>
<protein>
    <recommendedName>
        <fullName>Dihydrolipoyl dehydrogenase</fullName>
        <ecNumber>1.8.1.4</ecNumber>
    </recommendedName>
    <alternativeName>
        <fullName>Dihydrolipoamide dehydrogenase</fullName>
    </alternativeName>
    <alternativeName>
        <fullName>E3 component of pyruvate complex</fullName>
    </alternativeName>
    <alternativeName>
        <fullName>Membrane-bound ribosome protein complex 50 kDa subunit</fullName>
    </alternativeName>
</protein>
<name>DLDH_STAAS</name>
<evidence type="ECO:0000250" key="1"/>
<evidence type="ECO:0000305" key="2"/>
<proteinExistence type="inferred from homology"/>
<sequence length="468" mass="49451">MVVGDFPIETDTIVIGAGPGGYVAAIRAAQLGQKVTIVEKGNLGGVCLNVGCIPSKALLHASHRFVEAQHSENLGVIAESVSLNFQKVQEFKSSVVNKLTGGVEGLLKGNKVNIVKGEAYFVDNNSLRVMDEKSAQTYNFKNAIIATGSRPIEIPNFKFGKRVIDSTGALNLQEVPGKLVVVGGGYIGSELGTAFANFGSEVTILEGAKDILGGFEKQMTQPVKKGMKEKGVEIVTEAMAKSAEETDNGVKVTYEAKGEEKTIEADYVLVTVGRRPNTDELGLEELGVKFADRGLLEVDKQSRTSISNIYAIGDIVPGLPLAHKASYEAKVAAEAIDGQAAEVDYIGMPAVCFTEPELATVGYSEAQAKEEGLAIKASKFPYAANGRALSLDDTNGFVKLITLKEDDTLIGAQVVGTGASDIISELGLAIEAGMNAEDIALTIHAHPTLGEMTMEAAEKAIGYPIHTM</sequence>
<keyword id="KW-0963">Cytoplasm</keyword>
<keyword id="KW-1015">Disulfide bond</keyword>
<keyword id="KW-0274">FAD</keyword>
<keyword id="KW-0285">Flavoprotein</keyword>
<keyword id="KW-0472">Membrane</keyword>
<keyword id="KW-0520">NAD</keyword>
<keyword id="KW-0560">Oxidoreductase</keyword>
<keyword id="KW-0676">Redox-active center</keyword>
<accession>Q6GAB8</accession>
<organism>
    <name type="scientific">Staphylococcus aureus (strain MSSA476)</name>
    <dbReference type="NCBI Taxonomy" id="282459"/>
    <lineage>
        <taxon>Bacteria</taxon>
        <taxon>Bacillati</taxon>
        <taxon>Bacillota</taxon>
        <taxon>Bacilli</taxon>
        <taxon>Bacillales</taxon>
        <taxon>Staphylococcaceae</taxon>
        <taxon>Staphylococcus</taxon>
    </lineage>
</organism>
<dbReference type="EC" id="1.8.1.4"/>
<dbReference type="EMBL" id="BX571857">
    <property type="protein sequence ID" value="CAG42805.1"/>
    <property type="molecule type" value="Genomic_DNA"/>
</dbReference>
<dbReference type="SMR" id="Q6GAB8"/>
<dbReference type="KEGG" id="sas:SAS1031"/>
<dbReference type="HOGENOM" id="CLU_016755_0_3_9"/>
<dbReference type="GO" id="GO:0005737">
    <property type="term" value="C:cytoplasm"/>
    <property type="evidence" value="ECO:0007669"/>
    <property type="project" value="UniProtKB-SubCell"/>
</dbReference>
<dbReference type="GO" id="GO:0016020">
    <property type="term" value="C:membrane"/>
    <property type="evidence" value="ECO:0007669"/>
    <property type="project" value="UniProtKB-SubCell"/>
</dbReference>
<dbReference type="GO" id="GO:0004148">
    <property type="term" value="F:dihydrolipoyl dehydrogenase (NADH) activity"/>
    <property type="evidence" value="ECO:0007669"/>
    <property type="project" value="UniProtKB-EC"/>
</dbReference>
<dbReference type="GO" id="GO:0050660">
    <property type="term" value="F:flavin adenine dinucleotide binding"/>
    <property type="evidence" value="ECO:0007669"/>
    <property type="project" value="InterPro"/>
</dbReference>
<dbReference type="GO" id="GO:0006103">
    <property type="term" value="P:2-oxoglutarate metabolic process"/>
    <property type="evidence" value="ECO:0007669"/>
    <property type="project" value="TreeGrafter"/>
</dbReference>
<dbReference type="FunFam" id="3.30.390.30:FF:000001">
    <property type="entry name" value="Dihydrolipoyl dehydrogenase"/>
    <property type="match status" value="1"/>
</dbReference>
<dbReference type="FunFam" id="3.50.50.60:FF:000037">
    <property type="entry name" value="Dihydrolipoyl dehydrogenase"/>
    <property type="match status" value="1"/>
</dbReference>
<dbReference type="Gene3D" id="3.30.390.30">
    <property type="match status" value="1"/>
</dbReference>
<dbReference type="Gene3D" id="3.50.50.60">
    <property type="entry name" value="FAD/NAD(P)-binding domain"/>
    <property type="match status" value="2"/>
</dbReference>
<dbReference type="InterPro" id="IPR050151">
    <property type="entry name" value="Class-I_Pyr_Nuc-Dis_Oxidored"/>
</dbReference>
<dbReference type="InterPro" id="IPR036188">
    <property type="entry name" value="FAD/NAD-bd_sf"/>
</dbReference>
<dbReference type="InterPro" id="IPR023753">
    <property type="entry name" value="FAD/NAD-binding_dom"/>
</dbReference>
<dbReference type="InterPro" id="IPR016156">
    <property type="entry name" value="FAD/NAD-linked_Rdtase_dimer_sf"/>
</dbReference>
<dbReference type="InterPro" id="IPR006258">
    <property type="entry name" value="Lipoamide_DH"/>
</dbReference>
<dbReference type="InterPro" id="IPR001100">
    <property type="entry name" value="Pyr_nuc-diS_OxRdtase"/>
</dbReference>
<dbReference type="InterPro" id="IPR004099">
    <property type="entry name" value="Pyr_nucl-diS_OxRdtase_dimer"/>
</dbReference>
<dbReference type="InterPro" id="IPR012999">
    <property type="entry name" value="Pyr_OxRdtase_I_AS"/>
</dbReference>
<dbReference type="NCBIfam" id="TIGR01350">
    <property type="entry name" value="lipoamide_DH"/>
    <property type="match status" value="1"/>
</dbReference>
<dbReference type="PANTHER" id="PTHR22912:SF160">
    <property type="entry name" value="DIHYDROLIPOYL DEHYDROGENASE"/>
    <property type="match status" value="1"/>
</dbReference>
<dbReference type="PANTHER" id="PTHR22912">
    <property type="entry name" value="DISULFIDE OXIDOREDUCTASE"/>
    <property type="match status" value="1"/>
</dbReference>
<dbReference type="Pfam" id="PF07992">
    <property type="entry name" value="Pyr_redox_2"/>
    <property type="match status" value="1"/>
</dbReference>
<dbReference type="Pfam" id="PF02852">
    <property type="entry name" value="Pyr_redox_dim"/>
    <property type="match status" value="1"/>
</dbReference>
<dbReference type="PIRSF" id="PIRSF000350">
    <property type="entry name" value="Mercury_reductase_MerA"/>
    <property type="match status" value="1"/>
</dbReference>
<dbReference type="PRINTS" id="PR00368">
    <property type="entry name" value="FADPNR"/>
</dbReference>
<dbReference type="PRINTS" id="PR00411">
    <property type="entry name" value="PNDRDTASEI"/>
</dbReference>
<dbReference type="SUPFAM" id="SSF51905">
    <property type="entry name" value="FAD/NAD(P)-binding domain"/>
    <property type="match status" value="1"/>
</dbReference>
<dbReference type="SUPFAM" id="SSF55424">
    <property type="entry name" value="FAD/NAD-linked reductases, dimerisation (C-terminal) domain"/>
    <property type="match status" value="1"/>
</dbReference>
<dbReference type="PROSITE" id="PS00076">
    <property type="entry name" value="PYRIDINE_REDOX_1"/>
    <property type="match status" value="1"/>
</dbReference>